<comment type="similarity">
    <text evidence="1">Belongs to the HesB/IscA family.</text>
</comment>
<proteinExistence type="inferred from homology"/>
<reference key="1">
    <citation type="book" date="2006" name="Gram positive pathogens, 2nd edition">
        <title>The Staphylococcus aureus NCTC 8325 genome.</title>
        <editorList>
            <person name="Fischetti V."/>
            <person name="Novick R."/>
            <person name="Ferretti J."/>
            <person name="Portnoy D."/>
            <person name="Rood J."/>
        </editorList>
        <authorList>
            <person name="Gillaspy A.F."/>
            <person name="Worrell V."/>
            <person name="Orvis J."/>
            <person name="Roe B.A."/>
            <person name="Dyer D.W."/>
            <person name="Iandolo J.J."/>
        </authorList>
    </citation>
    <scope>NUCLEOTIDE SEQUENCE [LARGE SCALE GENOMIC DNA]</scope>
    <source>
        <strain>NCTC 8325 / PS 47</strain>
    </source>
</reference>
<dbReference type="EMBL" id="CP000253">
    <property type="protein sequence ID" value="ABD30445.1"/>
    <property type="molecule type" value="Genomic_DNA"/>
</dbReference>
<dbReference type="RefSeq" id="WP_001165377.1">
    <property type="nucleotide sequence ID" value="NZ_LS483365.1"/>
</dbReference>
<dbReference type="RefSeq" id="YP_499877.1">
    <property type="nucleotide sequence ID" value="NC_007795.1"/>
</dbReference>
<dbReference type="SMR" id="Q2FYS7"/>
<dbReference type="STRING" id="93061.SAOUHSC_01349"/>
<dbReference type="PaxDb" id="1280-SAXN108_1368"/>
<dbReference type="GeneID" id="3920055"/>
<dbReference type="KEGG" id="sao:SAOUHSC_01349"/>
<dbReference type="PATRIC" id="fig|93061.5.peg.1235"/>
<dbReference type="eggNOG" id="COG4841">
    <property type="taxonomic scope" value="Bacteria"/>
</dbReference>
<dbReference type="HOGENOM" id="CLU_163967_0_0_9"/>
<dbReference type="OrthoDB" id="1645729at2"/>
<dbReference type="PRO" id="PR:Q2FYS7"/>
<dbReference type="Proteomes" id="UP000008816">
    <property type="component" value="Chromosome"/>
</dbReference>
<dbReference type="InterPro" id="IPR035903">
    <property type="entry name" value="HesB-like_dom_sf"/>
</dbReference>
<dbReference type="InterPro" id="IPR008326">
    <property type="entry name" value="PdhI-like"/>
</dbReference>
<dbReference type="PIRSF" id="PIRSF034852">
    <property type="entry name" value="UCP034852"/>
    <property type="match status" value="1"/>
</dbReference>
<dbReference type="SUPFAM" id="SSF89360">
    <property type="entry name" value="HesB-like domain"/>
    <property type="match status" value="1"/>
</dbReference>
<accession>Q2FYS7</accession>
<evidence type="ECO:0000305" key="1"/>
<sequence length="98" mass="11496">MQIELTDAAVTWFKNELELPENNKVLVFFVRYGGEFQLKQGFSPAFTVEPKEDVDIGYEQQYDDLNVVVAEKDLWYFEDDHIIVNVVDHEDEISYSTK</sequence>
<name>Y1349_STAA8</name>
<keyword id="KW-1185">Reference proteome</keyword>
<feature type="chain" id="PRO_0000300081" description="Uncharacterized protein SAOUHSC_01349">
    <location>
        <begin position="1"/>
        <end position="98"/>
    </location>
</feature>
<protein>
    <recommendedName>
        <fullName>Uncharacterized protein SAOUHSC_01349</fullName>
    </recommendedName>
</protein>
<organism>
    <name type="scientific">Staphylococcus aureus (strain NCTC 8325 / PS 47)</name>
    <dbReference type="NCBI Taxonomy" id="93061"/>
    <lineage>
        <taxon>Bacteria</taxon>
        <taxon>Bacillati</taxon>
        <taxon>Bacillota</taxon>
        <taxon>Bacilli</taxon>
        <taxon>Bacillales</taxon>
        <taxon>Staphylococcaceae</taxon>
        <taxon>Staphylococcus</taxon>
    </lineage>
</organism>
<gene>
    <name type="ordered locus">SAOUHSC_01349</name>
</gene>